<feature type="chain" id="PRO_1000197635" description="SsrA-binding protein">
    <location>
        <begin position="1"/>
        <end position="149"/>
    </location>
</feature>
<name>SSRP_WOLWR</name>
<accession>C0R392</accession>
<reference key="1">
    <citation type="journal article" date="2009" name="Proc. Natl. Acad. Sci. U.S.A.">
        <title>The mosaic genome structure of the Wolbachia wRi strain infecting Drosophila simulans.</title>
        <authorList>
            <person name="Klasson L."/>
            <person name="Westberg J."/>
            <person name="Sapountzis P."/>
            <person name="Naeslund K."/>
            <person name="Lutnaes Y."/>
            <person name="Darby A.C."/>
            <person name="Veneti Z."/>
            <person name="Chen L."/>
            <person name="Braig H.R."/>
            <person name="Garrett R."/>
            <person name="Bourtzis K."/>
            <person name="Andersson S.G."/>
        </authorList>
    </citation>
    <scope>NUCLEOTIDE SEQUENCE [LARGE SCALE GENOMIC DNA]</scope>
    <source>
        <strain>wRi</strain>
    </source>
</reference>
<gene>
    <name evidence="1" type="primary">smpB</name>
    <name type="ordered locus">WRi_006100</name>
</gene>
<proteinExistence type="inferred from homology"/>
<sequence length="149" mass="17513">MEVIAENRKARFEYFILEEFEAGMVLLSSEVKSLRERKVNISDAYVVEKNSEVWLHNMHIAEYKAANRKNHKPKRERKLLLHKKEINKLIGQIKTAGITVVPLSVYFNDKGFAKTKIAIVKGKKLYDKRATIKQREWDREKSRLSKNNL</sequence>
<dbReference type="EMBL" id="CP001391">
    <property type="protein sequence ID" value="ACN95384.1"/>
    <property type="molecule type" value="Genomic_DNA"/>
</dbReference>
<dbReference type="RefSeq" id="WP_007548863.1">
    <property type="nucleotide sequence ID" value="NZ_MKIF01000015.1"/>
</dbReference>
<dbReference type="SMR" id="C0R392"/>
<dbReference type="STRING" id="66084.WRi_006100"/>
<dbReference type="GeneID" id="70036248"/>
<dbReference type="KEGG" id="wri:WRi_006100"/>
<dbReference type="HOGENOM" id="CLU_108953_0_1_5"/>
<dbReference type="Proteomes" id="UP000001293">
    <property type="component" value="Chromosome"/>
</dbReference>
<dbReference type="GO" id="GO:0005829">
    <property type="term" value="C:cytosol"/>
    <property type="evidence" value="ECO:0007669"/>
    <property type="project" value="TreeGrafter"/>
</dbReference>
<dbReference type="GO" id="GO:0003723">
    <property type="term" value="F:RNA binding"/>
    <property type="evidence" value="ECO:0007669"/>
    <property type="project" value="UniProtKB-UniRule"/>
</dbReference>
<dbReference type="GO" id="GO:0070929">
    <property type="term" value="P:trans-translation"/>
    <property type="evidence" value="ECO:0007669"/>
    <property type="project" value="UniProtKB-UniRule"/>
</dbReference>
<dbReference type="CDD" id="cd09294">
    <property type="entry name" value="SmpB"/>
    <property type="match status" value="1"/>
</dbReference>
<dbReference type="Gene3D" id="2.40.280.10">
    <property type="match status" value="1"/>
</dbReference>
<dbReference type="HAMAP" id="MF_00023">
    <property type="entry name" value="SmpB"/>
    <property type="match status" value="1"/>
</dbReference>
<dbReference type="InterPro" id="IPR023620">
    <property type="entry name" value="SmpB"/>
</dbReference>
<dbReference type="InterPro" id="IPR000037">
    <property type="entry name" value="SsrA-bd_prot"/>
</dbReference>
<dbReference type="NCBIfam" id="NF003843">
    <property type="entry name" value="PRK05422.1"/>
    <property type="match status" value="1"/>
</dbReference>
<dbReference type="NCBIfam" id="TIGR00086">
    <property type="entry name" value="smpB"/>
    <property type="match status" value="1"/>
</dbReference>
<dbReference type="PANTHER" id="PTHR30308:SF2">
    <property type="entry name" value="SSRA-BINDING PROTEIN"/>
    <property type="match status" value="1"/>
</dbReference>
<dbReference type="PANTHER" id="PTHR30308">
    <property type="entry name" value="TMRNA-BINDING COMPONENT OF TRANS-TRANSLATION TAGGING COMPLEX"/>
    <property type="match status" value="1"/>
</dbReference>
<dbReference type="Pfam" id="PF01668">
    <property type="entry name" value="SmpB"/>
    <property type="match status" value="1"/>
</dbReference>
<dbReference type="SUPFAM" id="SSF74982">
    <property type="entry name" value="Small protein B (SmpB)"/>
    <property type="match status" value="1"/>
</dbReference>
<evidence type="ECO:0000255" key="1">
    <source>
        <dbReference type="HAMAP-Rule" id="MF_00023"/>
    </source>
</evidence>
<keyword id="KW-0963">Cytoplasm</keyword>
<keyword id="KW-0694">RNA-binding</keyword>
<comment type="function">
    <text evidence="1">Required for rescue of stalled ribosomes mediated by trans-translation. Binds to transfer-messenger RNA (tmRNA), required for stable association of tmRNA with ribosomes. tmRNA and SmpB together mimic tRNA shape, replacing the anticodon stem-loop with SmpB. tmRNA is encoded by the ssrA gene; the 2 termini fold to resemble tRNA(Ala) and it encodes a 'tag peptide', a short internal open reading frame. During trans-translation Ala-aminoacylated tmRNA acts like a tRNA, entering the A-site of stalled ribosomes, displacing the stalled mRNA. The ribosome then switches to translate the ORF on the tmRNA; the nascent peptide is terminated with the 'tag peptide' encoded by the tmRNA and targeted for degradation. The ribosome is freed to recommence translation, which seems to be the essential function of trans-translation.</text>
</comment>
<comment type="subcellular location">
    <subcellularLocation>
        <location evidence="1">Cytoplasm</location>
    </subcellularLocation>
    <text evidence="1">The tmRNA-SmpB complex associates with stalled 70S ribosomes.</text>
</comment>
<comment type="similarity">
    <text evidence="1">Belongs to the SmpB family.</text>
</comment>
<organism>
    <name type="scientific">Wolbachia sp. subsp. Drosophila simulans (strain wRi)</name>
    <dbReference type="NCBI Taxonomy" id="66084"/>
    <lineage>
        <taxon>Bacteria</taxon>
        <taxon>Pseudomonadati</taxon>
        <taxon>Pseudomonadota</taxon>
        <taxon>Alphaproteobacteria</taxon>
        <taxon>Rickettsiales</taxon>
        <taxon>Anaplasmataceae</taxon>
        <taxon>Wolbachieae</taxon>
        <taxon>Wolbachia</taxon>
    </lineage>
</organism>
<protein>
    <recommendedName>
        <fullName evidence="1">SsrA-binding protein</fullName>
    </recommendedName>
    <alternativeName>
        <fullName evidence="1">Small protein B</fullName>
    </alternativeName>
</protein>